<dbReference type="EC" id="2.1.1.193"/>
<dbReference type="EMBL" id="AE000511">
    <property type="protein sequence ID" value="AAD07443.1"/>
    <property type="molecule type" value="Genomic_DNA"/>
</dbReference>
<dbReference type="PIR" id="F64566">
    <property type="entry name" value="F64566"/>
</dbReference>
<dbReference type="RefSeq" id="NP_207172.1">
    <property type="nucleotide sequence ID" value="NC_000915.1"/>
</dbReference>
<dbReference type="RefSeq" id="WP_001213204.1">
    <property type="nucleotide sequence ID" value="NC_018939.1"/>
</dbReference>
<dbReference type="SMR" id="O25138"/>
<dbReference type="FunCoup" id="O25138">
    <property type="interactions" value="264"/>
</dbReference>
<dbReference type="STRING" id="85962.HP_0374"/>
<dbReference type="PaxDb" id="85962-C694_01900"/>
<dbReference type="EnsemblBacteria" id="AAD07443">
    <property type="protein sequence ID" value="AAD07443"/>
    <property type="gene ID" value="HP_0374"/>
</dbReference>
<dbReference type="KEGG" id="heo:C694_01900"/>
<dbReference type="KEGG" id="hpy:HP_0374"/>
<dbReference type="PATRIC" id="fig|85962.47.peg.397"/>
<dbReference type="eggNOG" id="COG1385">
    <property type="taxonomic scope" value="Bacteria"/>
</dbReference>
<dbReference type="InParanoid" id="O25138"/>
<dbReference type="OrthoDB" id="9815641at2"/>
<dbReference type="PhylomeDB" id="O25138"/>
<dbReference type="Proteomes" id="UP000000429">
    <property type="component" value="Chromosome"/>
</dbReference>
<dbReference type="GO" id="GO:0005737">
    <property type="term" value="C:cytoplasm"/>
    <property type="evidence" value="ECO:0007669"/>
    <property type="project" value="UniProtKB-SubCell"/>
</dbReference>
<dbReference type="GO" id="GO:0070042">
    <property type="term" value="F:rRNA (uridine-N3-)-methyltransferase activity"/>
    <property type="evidence" value="ECO:0000318"/>
    <property type="project" value="GO_Central"/>
</dbReference>
<dbReference type="GO" id="GO:0070475">
    <property type="term" value="P:rRNA base methylation"/>
    <property type="evidence" value="ECO:0000318"/>
    <property type="project" value="GO_Central"/>
</dbReference>
<dbReference type="CDD" id="cd18084">
    <property type="entry name" value="RsmE-like"/>
    <property type="match status" value="1"/>
</dbReference>
<dbReference type="FunFam" id="3.40.1280.10:FF:000049">
    <property type="entry name" value="Ribosomal RNA small subunit methyltransferase E"/>
    <property type="match status" value="1"/>
</dbReference>
<dbReference type="Gene3D" id="3.40.1280.10">
    <property type="match status" value="1"/>
</dbReference>
<dbReference type="InterPro" id="IPR029028">
    <property type="entry name" value="Alpha/beta_knot_MTases"/>
</dbReference>
<dbReference type="InterPro" id="IPR006700">
    <property type="entry name" value="RsmE"/>
</dbReference>
<dbReference type="InterPro" id="IPR046886">
    <property type="entry name" value="RsmE_MTase_dom"/>
</dbReference>
<dbReference type="InterPro" id="IPR046887">
    <property type="entry name" value="RsmE_PUA-like"/>
</dbReference>
<dbReference type="InterPro" id="IPR029026">
    <property type="entry name" value="tRNA_m1G_MTases_N"/>
</dbReference>
<dbReference type="NCBIfam" id="NF008695">
    <property type="entry name" value="PRK11713.3-3"/>
    <property type="match status" value="1"/>
</dbReference>
<dbReference type="NCBIfam" id="TIGR00046">
    <property type="entry name" value="RsmE family RNA methyltransferase"/>
    <property type="match status" value="1"/>
</dbReference>
<dbReference type="PANTHER" id="PTHR30027:SF3">
    <property type="entry name" value="16S RRNA (URACIL(1498)-N(3))-METHYLTRANSFERASE"/>
    <property type="match status" value="1"/>
</dbReference>
<dbReference type="PANTHER" id="PTHR30027">
    <property type="entry name" value="RIBOSOMAL RNA SMALL SUBUNIT METHYLTRANSFERASE E"/>
    <property type="match status" value="1"/>
</dbReference>
<dbReference type="Pfam" id="PF04452">
    <property type="entry name" value="Methyltrans_RNA"/>
    <property type="match status" value="1"/>
</dbReference>
<dbReference type="Pfam" id="PF20260">
    <property type="entry name" value="PUA_4"/>
    <property type="match status" value="1"/>
</dbReference>
<dbReference type="PIRSF" id="PIRSF015601">
    <property type="entry name" value="MTase_slr0722"/>
    <property type="match status" value="1"/>
</dbReference>
<dbReference type="SUPFAM" id="SSF75217">
    <property type="entry name" value="alpha/beta knot"/>
    <property type="match status" value="1"/>
</dbReference>
<protein>
    <recommendedName>
        <fullName>Ribosomal RNA small subunit methyltransferase E</fullName>
        <ecNumber>2.1.1.193</ecNumber>
    </recommendedName>
    <alternativeName>
        <fullName>16S rRNA m3U1498 methyltransferase</fullName>
    </alternativeName>
</protein>
<comment type="function">
    <text evidence="1">Specifically methylates the N3 position of the uracil ring of uridine 1498 (m3U1498) in 16S rRNA. Acts on the fully assembled 30S ribosomal subunit (By similarity).</text>
</comment>
<comment type="catalytic activity">
    <reaction>
        <text>uridine(1498) in 16S rRNA + S-adenosyl-L-methionine = N(3)-methyluridine(1498) in 16S rRNA + S-adenosyl-L-homocysteine + H(+)</text>
        <dbReference type="Rhea" id="RHEA:42920"/>
        <dbReference type="Rhea" id="RHEA-COMP:10283"/>
        <dbReference type="Rhea" id="RHEA-COMP:10284"/>
        <dbReference type="ChEBI" id="CHEBI:15378"/>
        <dbReference type="ChEBI" id="CHEBI:57856"/>
        <dbReference type="ChEBI" id="CHEBI:59789"/>
        <dbReference type="ChEBI" id="CHEBI:65315"/>
        <dbReference type="ChEBI" id="CHEBI:74502"/>
        <dbReference type="EC" id="2.1.1.193"/>
    </reaction>
</comment>
<comment type="subcellular location">
    <subcellularLocation>
        <location evidence="1">Cytoplasm</location>
    </subcellularLocation>
</comment>
<comment type="similarity">
    <text evidence="2">Belongs to the RNA methyltransferase RsmE family.</text>
</comment>
<feature type="chain" id="PRO_0000176210" description="Ribosomal RNA small subunit methyltransferase E">
    <location>
        <begin position="1"/>
        <end position="226"/>
    </location>
</feature>
<proteinExistence type="inferred from homology"/>
<sequence>MRFVYHPLAKEPVLKIEGESYTHLYRSRRVKSASRLDLRNLKDGFLYTYEHAEITKKHALLKLVGARLLEVMASKKTHLILSVIEIKNIEKILPFLNQLGVSKLSLFYADFSQRNEKIDIAKLERFQKILIHSCEQCGRSALMELEVFSNTKEALKAYPKASVLDFKGETLPASADFEKGVIIGPEGGFSEPERGYFKEREIYRIPLDMVLKSESACVFVASIAQV</sequence>
<reference key="1">
    <citation type="journal article" date="1997" name="Nature">
        <title>The complete genome sequence of the gastric pathogen Helicobacter pylori.</title>
        <authorList>
            <person name="Tomb J.-F."/>
            <person name="White O."/>
            <person name="Kerlavage A.R."/>
            <person name="Clayton R.A."/>
            <person name="Sutton G.G."/>
            <person name="Fleischmann R.D."/>
            <person name="Ketchum K.A."/>
            <person name="Klenk H.-P."/>
            <person name="Gill S.R."/>
            <person name="Dougherty B.A."/>
            <person name="Nelson K.E."/>
            <person name="Quackenbush J."/>
            <person name="Zhou L."/>
            <person name="Kirkness E.F."/>
            <person name="Peterson S.N."/>
            <person name="Loftus B.J."/>
            <person name="Richardson D.L."/>
            <person name="Dodson R.J."/>
            <person name="Khalak H.G."/>
            <person name="Glodek A."/>
            <person name="McKenney K."/>
            <person name="FitzGerald L.M."/>
            <person name="Lee N."/>
            <person name="Adams M.D."/>
            <person name="Hickey E.K."/>
            <person name="Berg D.E."/>
            <person name="Gocayne J.D."/>
            <person name="Utterback T.R."/>
            <person name="Peterson J.D."/>
            <person name="Kelley J.M."/>
            <person name="Cotton M.D."/>
            <person name="Weidman J.F."/>
            <person name="Fujii C."/>
            <person name="Bowman C."/>
            <person name="Watthey L."/>
            <person name="Wallin E."/>
            <person name="Hayes W.S."/>
            <person name="Borodovsky M."/>
            <person name="Karp P.D."/>
            <person name="Smith H.O."/>
            <person name="Fraser C.M."/>
            <person name="Venter J.C."/>
        </authorList>
    </citation>
    <scope>NUCLEOTIDE SEQUENCE [LARGE SCALE GENOMIC DNA]</scope>
    <source>
        <strain>ATCC 700392 / 26695</strain>
    </source>
</reference>
<keyword id="KW-0963">Cytoplasm</keyword>
<keyword id="KW-0489">Methyltransferase</keyword>
<keyword id="KW-1185">Reference proteome</keyword>
<keyword id="KW-0698">rRNA processing</keyword>
<keyword id="KW-0949">S-adenosyl-L-methionine</keyword>
<keyword id="KW-0808">Transferase</keyword>
<organism>
    <name type="scientific">Helicobacter pylori (strain ATCC 700392 / 26695)</name>
    <name type="common">Campylobacter pylori</name>
    <dbReference type="NCBI Taxonomy" id="85962"/>
    <lineage>
        <taxon>Bacteria</taxon>
        <taxon>Pseudomonadati</taxon>
        <taxon>Campylobacterota</taxon>
        <taxon>Epsilonproteobacteria</taxon>
        <taxon>Campylobacterales</taxon>
        <taxon>Helicobacteraceae</taxon>
        <taxon>Helicobacter</taxon>
    </lineage>
</organism>
<evidence type="ECO:0000250" key="1"/>
<evidence type="ECO:0000305" key="2"/>
<accession>O25138</accession>
<gene>
    <name type="primary">rsmE</name>
    <name type="ordered locus">HP_0374</name>
</gene>
<name>RSME_HELPY</name>